<comment type="function">
    <text evidence="1">Catalyzes the transfer of the enolpyruvyl moiety of phosphoenolpyruvate (PEP) to the 5-hydroxyl of shikimate-3-phosphate (S3P) to produce enolpyruvyl shikimate-3-phosphate and inorganic phosphate.</text>
</comment>
<comment type="catalytic activity">
    <reaction evidence="1">
        <text>3-phosphoshikimate + phosphoenolpyruvate = 5-O-(1-carboxyvinyl)-3-phosphoshikimate + phosphate</text>
        <dbReference type="Rhea" id="RHEA:21256"/>
        <dbReference type="ChEBI" id="CHEBI:43474"/>
        <dbReference type="ChEBI" id="CHEBI:57701"/>
        <dbReference type="ChEBI" id="CHEBI:58702"/>
        <dbReference type="ChEBI" id="CHEBI:145989"/>
        <dbReference type="EC" id="2.5.1.19"/>
    </reaction>
    <physiologicalReaction direction="left-to-right" evidence="1">
        <dbReference type="Rhea" id="RHEA:21257"/>
    </physiologicalReaction>
</comment>
<comment type="pathway">
    <text evidence="1">Metabolic intermediate biosynthesis; chorismate biosynthesis; chorismate from D-erythrose 4-phosphate and phosphoenolpyruvate: step 6/7.</text>
</comment>
<comment type="subunit">
    <text evidence="1">Monomer.</text>
</comment>
<comment type="subcellular location">
    <subcellularLocation>
        <location evidence="1">Cytoplasm</location>
    </subcellularLocation>
</comment>
<comment type="similarity">
    <text evidence="1">Belongs to the EPSP synthase family.</text>
</comment>
<accession>Q03LG9</accession>
<name>AROA_STRTD</name>
<reference key="1">
    <citation type="journal article" date="2006" name="Proc. Natl. Acad. Sci. U.S.A.">
        <title>Comparative genomics of the lactic acid bacteria.</title>
        <authorList>
            <person name="Makarova K.S."/>
            <person name="Slesarev A."/>
            <person name="Wolf Y.I."/>
            <person name="Sorokin A."/>
            <person name="Mirkin B."/>
            <person name="Koonin E.V."/>
            <person name="Pavlov A."/>
            <person name="Pavlova N."/>
            <person name="Karamychev V."/>
            <person name="Polouchine N."/>
            <person name="Shakhova V."/>
            <person name="Grigoriev I."/>
            <person name="Lou Y."/>
            <person name="Rohksar D."/>
            <person name="Lucas S."/>
            <person name="Huang K."/>
            <person name="Goodstein D.M."/>
            <person name="Hawkins T."/>
            <person name="Plengvidhya V."/>
            <person name="Welker D."/>
            <person name="Hughes J."/>
            <person name="Goh Y."/>
            <person name="Benson A."/>
            <person name="Baldwin K."/>
            <person name="Lee J.-H."/>
            <person name="Diaz-Muniz I."/>
            <person name="Dosti B."/>
            <person name="Smeianov V."/>
            <person name="Wechter W."/>
            <person name="Barabote R."/>
            <person name="Lorca G."/>
            <person name="Altermann E."/>
            <person name="Barrangou R."/>
            <person name="Ganesan B."/>
            <person name="Xie Y."/>
            <person name="Rawsthorne H."/>
            <person name="Tamir D."/>
            <person name="Parker C."/>
            <person name="Breidt F."/>
            <person name="Broadbent J.R."/>
            <person name="Hutkins R."/>
            <person name="O'Sullivan D."/>
            <person name="Steele J."/>
            <person name="Unlu G."/>
            <person name="Saier M.H. Jr."/>
            <person name="Klaenhammer T."/>
            <person name="Richardson P."/>
            <person name="Kozyavkin S."/>
            <person name="Weimer B.C."/>
            <person name="Mills D.A."/>
        </authorList>
    </citation>
    <scope>NUCLEOTIDE SEQUENCE [LARGE SCALE GENOMIC DNA]</scope>
    <source>
        <strain>ATCC BAA-491 / LMD-9</strain>
    </source>
</reference>
<dbReference type="EC" id="2.5.1.19" evidence="1"/>
<dbReference type="EMBL" id="CP000419">
    <property type="protein sequence ID" value="ABJ65953.1"/>
    <property type="molecule type" value="Genomic_DNA"/>
</dbReference>
<dbReference type="RefSeq" id="WP_011680947.1">
    <property type="nucleotide sequence ID" value="NC_008532.1"/>
</dbReference>
<dbReference type="SMR" id="Q03LG9"/>
<dbReference type="KEGG" id="ste:STER_0695"/>
<dbReference type="HOGENOM" id="CLU_024321_0_1_9"/>
<dbReference type="UniPathway" id="UPA00053">
    <property type="reaction ID" value="UER00089"/>
</dbReference>
<dbReference type="GO" id="GO:0005737">
    <property type="term" value="C:cytoplasm"/>
    <property type="evidence" value="ECO:0007669"/>
    <property type="project" value="UniProtKB-SubCell"/>
</dbReference>
<dbReference type="GO" id="GO:0003866">
    <property type="term" value="F:3-phosphoshikimate 1-carboxyvinyltransferase activity"/>
    <property type="evidence" value="ECO:0007669"/>
    <property type="project" value="UniProtKB-UniRule"/>
</dbReference>
<dbReference type="GO" id="GO:0008652">
    <property type="term" value="P:amino acid biosynthetic process"/>
    <property type="evidence" value="ECO:0007669"/>
    <property type="project" value="UniProtKB-KW"/>
</dbReference>
<dbReference type="GO" id="GO:0009073">
    <property type="term" value="P:aromatic amino acid family biosynthetic process"/>
    <property type="evidence" value="ECO:0007669"/>
    <property type="project" value="UniProtKB-KW"/>
</dbReference>
<dbReference type="GO" id="GO:0009423">
    <property type="term" value="P:chorismate biosynthetic process"/>
    <property type="evidence" value="ECO:0007669"/>
    <property type="project" value="UniProtKB-UniRule"/>
</dbReference>
<dbReference type="CDD" id="cd01556">
    <property type="entry name" value="EPSP_synthase"/>
    <property type="match status" value="1"/>
</dbReference>
<dbReference type="FunFam" id="3.65.10.10:FF:000005">
    <property type="entry name" value="3-phosphoshikimate 1-carboxyvinyltransferase"/>
    <property type="match status" value="1"/>
</dbReference>
<dbReference type="FunFam" id="3.65.10.10:FF:000006">
    <property type="entry name" value="3-phosphoshikimate 1-carboxyvinyltransferase"/>
    <property type="match status" value="1"/>
</dbReference>
<dbReference type="Gene3D" id="3.65.10.10">
    <property type="entry name" value="Enolpyruvate transferase domain"/>
    <property type="match status" value="2"/>
</dbReference>
<dbReference type="HAMAP" id="MF_00210">
    <property type="entry name" value="EPSP_synth"/>
    <property type="match status" value="1"/>
</dbReference>
<dbReference type="InterPro" id="IPR001986">
    <property type="entry name" value="Enolpyruvate_Tfrase_dom"/>
</dbReference>
<dbReference type="InterPro" id="IPR036968">
    <property type="entry name" value="Enolpyruvate_Tfrase_sf"/>
</dbReference>
<dbReference type="InterPro" id="IPR006264">
    <property type="entry name" value="EPSP_synthase"/>
</dbReference>
<dbReference type="InterPro" id="IPR023193">
    <property type="entry name" value="EPSP_synthase_CS"/>
</dbReference>
<dbReference type="InterPro" id="IPR013792">
    <property type="entry name" value="RNA3'P_cycl/enolpyr_Trfase_a/b"/>
</dbReference>
<dbReference type="NCBIfam" id="TIGR01356">
    <property type="entry name" value="aroA"/>
    <property type="match status" value="1"/>
</dbReference>
<dbReference type="PANTHER" id="PTHR21090">
    <property type="entry name" value="AROM/DEHYDROQUINATE SYNTHASE"/>
    <property type="match status" value="1"/>
</dbReference>
<dbReference type="PANTHER" id="PTHR21090:SF5">
    <property type="entry name" value="PENTAFUNCTIONAL AROM POLYPEPTIDE"/>
    <property type="match status" value="1"/>
</dbReference>
<dbReference type="Pfam" id="PF00275">
    <property type="entry name" value="EPSP_synthase"/>
    <property type="match status" value="1"/>
</dbReference>
<dbReference type="PIRSF" id="PIRSF000505">
    <property type="entry name" value="EPSPS"/>
    <property type="match status" value="1"/>
</dbReference>
<dbReference type="SUPFAM" id="SSF55205">
    <property type="entry name" value="EPT/RTPC-like"/>
    <property type="match status" value="1"/>
</dbReference>
<dbReference type="PROSITE" id="PS00104">
    <property type="entry name" value="EPSP_SYNTHASE_1"/>
    <property type="match status" value="1"/>
</dbReference>
<dbReference type="PROSITE" id="PS00885">
    <property type="entry name" value="EPSP_SYNTHASE_2"/>
    <property type="match status" value="1"/>
</dbReference>
<evidence type="ECO:0000255" key="1">
    <source>
        <dbReference type="HAMAP-Rule" id="MF_00210"/>
    </source>
</evidence>
<proteinExistence type="inferred from homology"/>
<keyword id="KW-0028">Amino-acid biosynthesis</keyword>
<keyword id="KW-0057">Aromatic amino acid biosynthesis</keyword>
<keyword id="KW-0963">Cytoplasm</keyword>
<keyword id="KW-0808">Transferase</keyword>
<organism>
    <name type="scientific">Streptococcus thermophilus (strain ATCC BAA-491 / LMD-9)</name>
    <dbReference type="NCBI Taxonomy" id="322159"/>
    <lineage>
        <taxon>Bacteria</taxon>
        <taxon>Bacillati</taxon>
        <taxon>Bacillota</taxon>
        <taxon>Bacilli</taxon>
        <taxon>Lactobacillales</taxon>
        <taxon>Streptococcaceae</taxon>
        <taxon>Streptococcus</taxon>
    </lineage>
</organism>
<gene>
    <name evidence="1" type="primary">aroA</name>
    <name type="ordered locus">STER_0695</name>
</gene>
<sequence>MKLETKAQGLRGSLRIPGDKSISHRSIMFGSLAKGVTTVRDILRGEDVLSTMQVFRDLGVTIEDDGDVVRIHGVGFDGLKAPQNKLDMGNSGTSIRLISGVLAGQDFDVEMFGDDSLSKRPMDRVTIPLRQMGVEVSGQTDRDLPPLKMHGSKSLKPIYYELPVASAQVKSALIFAALQADGESVIIEKEKTRNHTEDMIQQFGGQLQVEGKEIRISGGQTFTAQEVVVPGDISSAAFWLVAGLVVPNSKIVLKNVGINETRTGIIDVIKNMGGKIKLSDIDQVAKSATITVETSELNGTEIGGDIIPRLIDELPIITLLATQAQGKTVIRDAEELKVKETDRIQVVADALNAMGADIVPTEDGMIITGKTPLHGAEVNTFGDHRIGMMTAIAALLVQDGEVDLQRAEAINTSYPSFFSDLEGLLHG</sequence>
<feature type="chain" id="PRO_1000012501" description="3-phosphoshikimate 1-carboxyvinyltransferase">
    <location>
        <begin position="1"/>
        <end position="427"/>
    </location>
</feature>
<feature type="active site" description="Proton acceptor" evidence="1">
    <location>
        <position position="312"/>
    </location>
</feature>
<feature type="binding site" evidence="1">
    <location>
        <position position="20"/>
    </location>
    <ligand>
        <name>3-phosphoshikimate</name>
        <dbReference type="ChEBI" id="CHEBI:145989"/>
    </ligand>
</feature>
<feature type="binding site" evidence="1">
    <location>
        <position position="20"/>
    </location>
    <ligand>
        <name>phosphoenolpyruvate</name>
        <dbReference type="ChEBI" id="CHEBI:58702"/>
    </ligand>
</feature>
<feature type="binding site" evidence="1">
    <location>
        <position position="21"/>
    </location>
    <ligand>
        <name>3-phosphoshikimate</name>
        <dbReference type="ChEBI" id="CHEBI:145989"/>
    </ligand>
</feature>
<feature type="binding site" evidence="1">
    <location>
        <position position="25"/>
    </location>
    <ligand>
        <name>3-phosphoshikimate</name>
        <dbReference type="ChEBI" id="CHEBI:145989"/>
    </ligand>
</feature>
<feature type="binding site" evidence="1">
    <location>
        <position position="92"/>
    </location>
    <ligand>
        <name>phosphoenolpyruvate</name>
        <dbReference type="ChEBI" id="CHEBI:58702"/>
    </ligand>
</feature>
<feature type="binding site" evidence="1">
    <location>
        <position position="120"/>
    </location>
    <ligand>
        <name>phosphoenolpyruvate</name>
        <dbReference type="ChEBI" id="CHEBI:58702"/>
    </ligand>
</feature>
<feature type="binding site" evidence="1">
    <location>
        <position position="166"/>
    </location>
    <ligand>
        <name>3-phosphoshikimate</name>
        <dbReference type="ChEBI" id="CHEBI:145989"/>
    </ligand>
</feature>
<feature type="binding site" evidence="1">
    <location>
        <position position="168"/>
    </location>
    <ligand>
        <name>3-phosphoshikimate</name>
        <dbReference type="ChEBI" id="CHEBI:145989"/>
    </ligand>
</feature>
<feature type="binding site" evidence="1">
    <location>
        <position position="168"/>
    </location>
    <ligand>
        <name>phosphoenolpyruvate</name>
        <dbReference type="ChEBI" id="CHEBI:58702"/>
    </ligand>
</feature>
<feature type="binding site" evidence="1">
    <location>
        <position position="312"/>
    </location>
    <ligand>
        <name>3-phosphoshikimate</name>
        <dbReference type="ChEBI" id="CHEBI:145989"/>
    </ligand>
</feature>
<feature type="binding site" evidence="1">
    <location>
        <position position="339"/>
    </location>
    <ligand>
        <name>3-phosphoshikimate</name>
        <dbReference type="ChEBI" id="CHEBI:145989"/>
    </ligand>
</feature>
<feature type="binding site" evidence="1">
    <location>
        <position position="343"/>
    </location>
    <ligand>
        <name>phosphoenolpyruvate</name>
        <dbReference type="ChEBI" id="CHEBI:58702"/>
    </ligand>
</feature>
<feature type="binding site" evidence="1">
    <location>
        <position position="385"/>
    </location>
    <ligand>
        <name>phosphoenolpyruvate</name>
        <dbReference type="ChEBI" id="CHEBI:58702"/>
    </ligand>
</feature>
<protein>
    <recommendedName>
        <fullName evidence="1">3-phosphoshikimate 1-carboxyvinyltransferase</fullName>
        <ecNumber evidence="1">2.5.1.19</ecNumber>
    </recommendedName>
    <alternativeName>
        <fullName evidence="1">5-enolpyruvylshikimate-3-phosphate synthase</fullName>
        <shortName evidence="1">EPSP synthase</shortName>
        <shortName evidence="1">EPSPS</shortName>
    </alternativeName>
</protein>